<feature type="chain" id="PRO_0000295115" description="Fez family zinc finger protein 1">
    <location>
        <begin position="1"/>
        <end position="475"/>
    </location>
</feature>
<feature type="zinc finger region" description="C2H2-type 1" evidence="1">
    <location>
        <begin position="260"/>
        <end position="282"/>
    </location>
</feature>
<feature type="zinc finger region" description="C2H2-type 2" evidence="1">
    <location>
        <begin position="288"/>
        <end position="310"/>
    </location>
</feature>
<feature type="zinc finger region" description="C2H2-type 3" evidence="1">
    <location>
        <begin position="316"/>
        <end position="338"/>
    </location>
</feature>
<feature type="zinc finger region" description="C2H2-type 4" evidence="1">
    <location>
        <begin position="344"/>
        <end position="366"/>
    </location>
</feature>
<feature type="zinc finger region" description="C2H2-type 5" evidence="1">
    <location>
        <begin position="372"/>
        <end position="394"/>
    </location>
</feature>
<feature type="zinc finger region" description="C2H2-type 6" evidence="1">
    <location>
        <begin position="400"/>
        <end position="423"/>
    </location>
</feature>
<feature type="region of interest" description="Disordered" evidence="2">
    <location>
        <begin position="425"/>
        <end position="475"/>
    </location>
</feature>
<feature type="short sequence motif" description="Engrailed homology 1 repressor">
    <location>
        <begin position="28"/>
        <end position="43"/>
    </location>
</feature>
<feature type="compositionally biased region" description="Polar residues" evidence="2">
    <location>
        <begin position="427"/>
        <end position="437"/>
    </location>
</feature>
<feature type="compositionally biased region" description="Pro residues" evidence="2">
    <location>
        <begin position="439"/>
        <end position="466"/>
    </location>
</feature>
<feature type="sequence conflict" description="In Ref. 1; BAB29221." evidence="6" ref="1">
    <original>I</original>
    <variation>M</variation>
    <location>
        <position position="178"/>
    </location>
</feature>
<organism>
    <name type="scientific">Mus musculus</name>
    <name type="common">Mouse</name>
    <dbReference type="NCBI Taxonomy" id="10090"/>
    <lineage>
        <taxon>Eukaryota</taxon>
        <taxon>Metazoa</taxon>
        <taxon>Chordata</taxon>
        <taxon>Craniata</taxon>
        <taxon>Vertebrata</taxon>
        <taxon>Euteleostomi</taxon>
        <taxon>Mammalia</taxon>
        <taxon>Eutheria</taxon>
        <taxon>Euarchontoglires</taxon>
        <taxon>Glires</taxon>
        <taxon>Rodentia</taxon>
        <taxon>Myomorpha</taxon>
        <taxon>Muroidea</taxon>
        <taxon>Muridae</taxon>
        <taxon>Murinae</taxon>
        <taxon>Mus</taxon>
        <taxon>Mus</taxon>
    </lineage>
</organism>
<name>FEZF1_MOUSE</name>
<keyword id="KW-0217">Developmental protein</keyword>
<keyword id="KW-0221">Differentiation</keyword>
<keyword id="KW-0238">DNA-binding</keyword>
<keyword id="KW-0479">Metal-binding</keyword>
<keyword id="KW-0524">Neurogenesis</keyword>
<keyword id="KW-0539">Nucleus</keyword>
<keyword id="KW-1185">Reference proteome</keyword>
<keyword id="KW-0677">Repeat</keyword>
<keyword id="KW-0678">Repressor</keyword>
<keyword id="KW-0804">Transcription</keyword>
<keyword id="KW-0805">Transcription regulation</keyword>
<keyword id="KW-0862">Zinc</keyword>
<keyword id="KW-0863">Zinc-finger</keyword>
<proteinExistence type="evidence at transcript level"/>
<accession>Q0VDQ9</accession>
<accession>Q9CXM3</accession>
<evidence type="ECO:0000255" key="1">
    <source>
        <dbReference type="PROSITE-ProRule" id="PRU00042"/>
    </source>
</evidence>
<evidence type="ECO:0000256" key="2">
    <source>
        <dbReference type="SAM" id="MobiDB-lite"/>
    </source>
</evidence>
<evidence type="ECO:0000269" key="3">
    <source>
    </source>
</evidence>
<evidence type="ECO:0000269" key="4">
    <source>
    </source>
</evidence>
<evidence type="ECO:0000269" key="5">
    <source>
    </source>
</evidence>
<evidence type="ECO:0000305" key="6"/>
<sequence length="475" mass="52006">MDSSCLNATTKMLATAPARGNVMSTSKPLAFSIERIMARTPEPKALPVPHFLQGAVPKGDPKHSLHLNSSIPCMIPFVPVAYDTNSKAGVNGSEPRKASLEVPAPPAVAPSAPAFSCSDLLNCALSLKGDLARDALPLQQYKLVRPRVVNHSSFHAMGALCYLNRGDGPCHPAASVNIHPVASYFLSSPLHPQPKTYLAERNKLVVPAVEKLPSGVAFKDLSQAQLQHYMKESAQLLSEKIAFKTSDFSRGSPNAKPKVFTCEVCGKVFNAHYNLTRHMPVHTGARPFVCKVCGKGFRQASTLCRHKIIHTQEKPHKCNQCGKAFNRSSTLNTHTRIHAGYKPFVCEFCGKGFHQKGNYKNHKLTHSGEKQFKCNICNKAFHQVYNLTFHMHTHNDKKPFTCPTCGKGFCRNFDLKKHVRKLHDSSLGLTRTPTGEPSSDPPPQLQQPPPAPLPPLQPTLPPPGPLPSGLHQGHQ</sequence>
<protein>
    <recommendedName>
        <fullName>Fez family zinc finger protein 1</fullName>
    </recommendedName>
</protein>
<comment type="function">
    <text evidence="4 5">Transcription repressor. Involved in the axonal projection and proper termination of olfactory sensory neurons (OSN). Plays a role in rostro-caudal patterning of the diencephalon and in prethalamic formation. Expression is required in OSN to cell-autonomously regulate OSN axon projections. Regulates non-cell-autonomously the layer formation of the olfactory bulb development and the interneurons. May be required for correct rostral migration of the interneuron progenitors.</text>
</comment>
<comment type="subcellular location">
    <subcellularLocation>
        <location evidence="6">Nucleus</location>
    </subcellularLocation>
</comment>
<comment type="developmental stage">
    <text evidence="3 4">At 8.0 dpc expressed in prospective forebrain region. At 12.5 dpc, detected in the olfactory epithelium, septum, roof of the telencephalon, amygdala, prethalamus and hypothalamus. Expression was barely detected in the vomeronasal organs at 12.5 dpc. At 15.5 dpc, detected weakly in the olfactory epithelium, amygdala and hypothalamusat 15.5 dpc. Expression was not detected in the olfactory bulb or in the ganglionic eminences, where the interneuron progenitors of the olfactory bulb are generated.</text>
</comment>
<comment type="disruption phenotype">
    <text evidence="4 5">Null mutants were born alive but most of them died within one day. The olfactory bulbs were smaller than those of their wild-type at 18.5 dpc and at postnatal day 1. At 14.5 dpc and 18 dpc no abnormalities in the morphology of the telencephalon or diencephalon were detected. There seems to be a redundant role for FEZF1 and FEZF2 in diencephalon development.</text>
</comment>
<comment type="similarity">
    <text evidence="6">Belongs to the krueppel C2H2-type zinc-finger protein family.</text>
</comment>
<reference key="1">
    <citation type="journal article" date="2005" name="Science">
        <title>The transcriptional landscape of the mammalian genome.</title>
        <authorList>
            <person name="Carninci P."/>
            <person name="Kasukawa T."/>
            <person name="Katayama S."/>
            <person name="Gough J."/>
            <person name="Frith M.C."/>
            <person name="Maeda N."/>
            <person name="Oyama R."/>
            <person name="Ravasi T."/>
            <person name="Lenhard B."/>
            <person name="Wells C."/>
            <person name="Kodzius R."/>
            <person name="Shimokawa K."/>
            <person name="Bajic V.B."/>
            <person name="Brenner S.E."/>
            <person name="Batalov S."/>
            <person name="Forrest A.R."/>
            <person name="Zavolan M."/>
            <person name="Davis M.J."/>
            <person name="Wilming L.G."/>
            <person name="Aidinis V."/>
            <person name="Allen J.E."/>
            <person name="Ambesi-Impiombato A."/>
            <person name="Apweiler R."/>
            <person name="Aturaliya R.N."/>
            <person name="Bailey T.L."/>
            <person name="Bansal M."/>
            <person name="Baxter L."/>
            <person name="Beisel K.W."/>
            <person name="Bersano T."/>
            <person name="Bono H."/>
            <person name="Chalk A.M."/>
            <person name="Chiu K.P."/>
            <person name="Choudhary V."/>
            <person name="Christoffels A."/>
            <person name="Clutterbuck D.R."/>
            <person name="Crowe M.L."/>
            <person name="Dalla E."/>
            <person name="Dalrymple B.P."/>
            <person name="de Bono B."/>
            <person name="Della Gatta G."/>
            <person name="di Bernardo D."/>
            <person name="Down T."/>
            <person name="Engstrom P."/>
            <person name="Fagiolini M."/>
            <person name="Faulkner G."/>
            <person name="Fletcher C.F."/>
            <person name="Fukushima T."/>
            <person name="Furuno M."/>
            <person name="Futaki S."/>
            <person name="Gariboldi M."/>
            <person name="Georgii-Hemming P."/>
            <person name="Gingeras T.R."/>
            <person name="Gojobori T."/>
            <person name="Green R.E."/>
            <person name="Gustincich S."/>
            <person name="Harbers M."/>
            <person name="Hayashi Y."/>
            <person name="Hensch T.K."/>
            <person name="Hirokawa N."/>
            <person name="Hill D."/>
            <person name="Huminiecki L."/>
            <person name="Iacono M."/>
            <person name="Ikeo K."/>
            <person name="Iwama A."/>
            <person name="Ishikawa T."/>
            <person name="Jakt M."/>
            <person name="Kanapin A."/>
            <person name="Katoh M."/>
            <person name="Kawasawa Y."/>
            <person name="Kelso J."/>
            <person name="Kitamura H."/>
            <person name="Kitano H."/>
            <person name="Kollias G."/>
            <person name="Krishnan S.P."/>
            <person name="Kruger A."/>
            <person name="Kummerfeld S.K."/>
            <person name="Kurochkin I.V."/>
            <person name="Lareau L.F."/>
            <person name="Lazarevic D."/>
            <person name="Lipovich L."/>
            <person name="Liu J."/>
            <person name="Liuni S."/>
            <person name="McWilliam S."/>
            <person name="Madan Babu M."/>
            <person name="Madera M."/>
            <person name="Marchionni L."/>
            <person name="Matsuda H."/>
            <person name="Matsuzawa S."/>
            <person name="Miki H."/>
            <person name="Mignone F."/>
            <person name="Miyake S."/>
            <person name="Morris K."/>
            <person name="Mottagui-Tabar S."/>
            <person name="Mulder N."/>
            <person name="Nakano N."/>
            <person name="Nakauchi H."/>
            <person name="Ng P."/>
            <person name="Nilsson R."/>
            <person name="Nishiguchi S."/>
            <person name="Nishikawa S."/>
            <person name="Nori F."/>
            <person name="Ohara O."/>
            <person name="Okazaki Y."/>
            <person name="Orlando V."/>
            <person name="Pang K.C."/>
            <person name="Pavan W.J."/>
            <person name="Pavesi G."/>
            <person name="Pesole G."/>
            <person name="Petrovsky N."/>
            <person name="Piazza S."/>
            <person name="Reed J."/>
            <person name="Reid J.F."/>
            <person name="Ring B.Z."/>
            <person name="Ringwald M."/>
            <person name="Rost B."/>
            <person name="Ruan Y."/>
            <person name="Salzberg S.L."/>
            <person name="Sandelin A."/>
            <person name="Schneider C."/>
            <person name="Schoenbach C."/>
            <person name="Sekiguchi K."/>
            <person name="Semple C.A."/>
            <person name="Seno S."/>
            <person name="Sessa L."/>
            <person name="Sheng Y."/>
            <person name="Shibata Y."/>
            <person name="Shimada H."/>
            <person name="Shimada K."/>
            <person name="Silva D."/>
            <person name="Sinclair B."/>
            <person name="Sperling S."/>
            <person name="Stupka E."/>
            <person name="Sugiura K."/>
            <person name="Sultana R."/>
            <person name="Takenaka Y."/>
            <person name="Taki K."/>
            <person name="Tammoja K."/>
            <person name="Tan S.L."/>
            <person name="Tang S."/>
            <person name="Taylor M.S."/>
            <person name="Tegner J."/>
            <person name="Teichmann S.A."/>
            <person name="Ueda H.R."/>
            <person name="van Nimwegen E."/>
            <person name="Verardo R."/>
            <person name="Wei C.L."/>
            <person name="Yagi K."/>
            <person name="Yamanishi H."/>
            <person name="Zabarovsky E."/>
            <person name="Zhu S."/>
            <person name="Zimmer A."/>
            <person name="Hide W."/>
            <person name="Bult C."/>
            <person name="Grimmond S.M."/>
            <person name="Teasdale R.D."/>
            <person name="Liu E.T."/>
            <person name="Brusic V."/>
            <person name="Quackenbush J."/>
            <person name="Wahlestedt C."/>
            <person name="Mattick J.S."/>
            <person name="Hume D.A."/>
            <person name="Kai C."/>
            <person name="Sasaki D."/>
            <person name="Tomaru Y."/>
            <person name="Fukuda S."/>
            <person name="Kanamori-Katayama M."/>
            <person name="Suzuki M."/>
            <person name="Aoki J."/>
            <person name="Arakawa T."/>
            <person name="Iida J."/>
            <person name="Imamura K."/>
            <person name="Itoh M."/>
            <person name="Kato T."/>
            <person name="Kawaji H."/>
            <person name="Kawagashira N."/>
            <person name="Kawashima T."/>
            <person name="Kojima M."/>
            <person name="Kondo S."/>
            <person name="Konno H."/>
            <person name="Nakano K."/>
            <person name="Ninomiya N."/>
            <person name="Nishio T."/>
            <person name="Okada M."/>
            <person name="Plessy C."/>
            <person name="Shibata K."/>
            <person name="Shiraki T."/>
            <person name="Suzuki S."/>
            <person name="Tagami M."/>
            <person name="Waki K."/>
            <person name="Watahiki A."/>
            <person name="Okamura-Oho Y."/>
            <person name="Suzuki H."/>
            <person name="Kawai J."/>
            <person name="Hayashizaki Y."/>
        </authorList>
    </citation>
    <scope>NUCLEOTIDE SEQUENCE [LARGE SCALE MRNA]</scope>
    <source>
        <strain>C57BL/6J</strain>
        <tissue>Head</tissue>
    </source>
</reference>
<reference key="2">
    <citation type="journal article" date="2004" name="Genome Res.">
        <title>The status, quality, and expansion of the NIH full-length cDNA project: the Mammalian Gene Collection (MGC).</title>
        <authorList>
            <consortium name="The MGC Project Team"/>
        </authorList>
    </citation>
    <scope>NUCLEOTIDE SEQUENCE [LARGE SCALE MRNA]</scope>
</reference>
<reference key="3">
    <citation type="journal article" date="2000" name="Mech. Dev.">
        <title>Cloning and expression of a novel zinc finger gene, Fez, transcribed in the forebrain of Xenopus and mouse embryos.</title>
        <authorList>
            <person name="Matsuo-Takasaki M."/>
            <person name="Lim J.H."/>
            <person name="Beanan M.J."/>
            <person name="Sato S.M."/>
            <person name="Sargent T.D."/>
        </authorList>
    </citation>
    <scope>DEVELOPMENTAL STAGE</scope>
</reference>
<reference key="4">
    <citation type="journal article" date="2006" name="Development">
        <title>Zinc-finger gene Fez in the olfactory sensory neurons regulates development of the olfactory bulb non-cell-autonomously.</title>
        <authorList>
            <person name="Hirata T."/>
            <person name="Nakazawa M."/>
            <person name="Yoshihara S."/>
            <person name="Miyachi H."/>
            <person name="Kitamura K."/>
            <person name="Yoshihara Y."/>
            <person name="Hibi M."/>
        </authorList>
    </citation>
    <scope>FUNCTION</scope>
    <scope>DEVELOPMENTAL STAGE</scope>
    <scope>DISRUPTION PHENOTYPE</scope>
</reference>
<reference key="5">
    <citation type="journal article" date="2006" name="Development">
        <title>Zinc-finger genes Fez and Fez-like function in the establishment of diencephalon subdivisions.</title>
        <authorList>
            <person name="Hirata T."/>
            <person name="Nakazawa M."/>
            <person name="Muraoka O."/>
            <person name="Nakayama R."/>
            <person name="Suda Y."/>
            <person name="Hibi M."/>
        </authorList>
    </citation>
    <scope>FUNCTION</scope>
    <scope>DISRUPTION PHENOTYPE</scope>
</reference>
<gene>
    <name type="primary">Fezf1</name>
    <name type="synonym">Fez</name>
</gene>
<dbReference type="EMBL" id="AK014242">
    <property type="protein sequence ID" value="BAB29221.1"/>
    <property type="molecule type" value="mRNA"/>
</dbReference>
<dbReference type="EMBL" id="BC119565">
    <property type="protein sequence ID" value="AAI19566.1"/>
    <property type="molecule type" value="mRNA"/>
</dbReference>
<dbReference type="EMBL" id="BC119566">
    <property type="protein sequence ID" value="AAI19567.1"/>
    <property type="molecule type" value="mRNA"/>
</dbReference>
<dbReference type="CCDS" id="CCDS51725.1"/>
<dbReference type="RefSeq" id="NP_082738.1">
    <property type="nucleotide sequence ID" value="NM_028462.1"/>
</dbReference>
<dbReference type="RefSeq" id="XP_006505238.1">
    <property type="nucleotide sequence ID" value="XM_006505175.5"/>
</dbReference>
<dbReference type="SMR" id="Q0VDQ9"/>
<dbReference type="FunCoup" id="Q0VDQ9">
    <property type="interactions" value="1040"/>
</dbReference>
<dbReference type="STRING" id="10090.ENSMUSP00000031709"/>
<dbReference type="iPTMnet" id="Q0VDQ9"/>
<dbReference type="PhosphoSitePlus" id="Q0VDQ9"/>
<dbReference type="PaxDb" id="10090-ENSMUSP00000031709"/>
<dbReference type="Antibodypedia" id="31725">
    <property type="antibodies" value="106 antibodies from 18 providers"/>
</dbReference>
<dbReference type="Ensembl" id="ENSMUST00000031709.7">
    <property type="protein sequence ID" value="ENSMUSP00000031709.6"/>
    <property type="gene ID" value="ENSMUSG00000029697.7"/>
</dbReference>
<dbReference type="GeneID" id="73191"/>
<dbReference type="KEGG" id="mmu:73191"/>
<dbReference type="UCSC" id="uc009bbd.2">
    <property type="organism name" value="mouse"/>
</dbReference>
<dbReference type="AGR" id="MGI:1920441"/>
<dbReference type="CTD" id="389549"/>
<dbReference type="MGI" id="MGI:1920441">
    <property type="gene designation" value="Fezf1"/>
</dbReference>
<dbReference type="VEuPathDB" id="HostDB:ENSMUSG00000029697"/>
<dbReference type="eggNOG" id="KOG1721">
    <property type="taxonomic scope" value="Eukaryota"/>
</dbReference>
<dbReference type="GeneTree" id="ENSGT00940000159477"/>
<dbReference type="HOGENOM" id="CLU_021813_2_1_1"/>
<dbReference type="InParanoid" id="Q0VDQ9"/>
<dbReference type="OMA" id="SQIQHYM"/>
<dbReference type="OrthoDB" id="5062908at2759"/>
<dbReference type="PhylomeDB" id="Q0VDQ9"/>
<dbReference type="TreeFam" id="TF316780"/>
<dbReference type="BioGRID-ORCS" id="73191">
    <property type="hits" value="0 hits in 79 CRISPR screens"/>
</dbReference>
<dbReference type="PRO" id="PR:Q0VDQ9"/>
<dbReference type="Proteomes" id="UP000000589">
    <property type="component" value="Chromosome 6"/>
</dbReference>
<dbReference type="RNAct" id="Q0VDQ9">
    <property type="molecule type" value="protein"/>
</dbReference>
<dbReference type="Bgee" id="ENSMUSG00000029697">
    <property type="expression patterns" value="Expressed in external naris and 28 other cell types or tissues"/>
</dbReference>
<dbReference type="GO" id="GO:0005829">
    <property type="term" value="C:cytosol"/>
    <property type="evidence" value="ECO:0007669"/>
    <property type="project" value="Ensembl"/>
</dbReference>
<dbReference type="GO" id="GO:0005654">
    <property type="term" value="C:nucleoplasm"/>
    <property type="evidence" value="ECO:0007669"/>
    <property type="project" value="Ensembl"/>
</dbReference>
<dbReference type="GO" id="GO:0001227">
    <property type="term" value="F:DNA-binding transcription repressor activity, RNA polymerase II-specific"/>
    <property type="evidence" value="ECO:0000315"/>
    <property type="project" value="NTNU_SB"/>
</dbReference>
<dbReference type="GO" id="GO:0000978">
    <property type="term" value="F:RNA polymerase II cis-regulatory region sequence-specific DNA binding"/>
    <property type="evidence" value="ECO:0000314"/>
    <property type="project" value="MGI"/>
</dbReference>
<dbReference type="GO" id="GO:0043565">
    <property type="term" value="F:sequence-specific DNA binding"/>
    <property type="evidence" value="ECO:0000314"/>
    <property type="project" value="UniProtKB"/>
</dbReference>
<dbReference type="GO" id="GO:0000976">
    <property type="term" value="F:transcription cis-regulatory region binding"/>
    <property type="evidence" value="ECO:0000314"/>
    <property type="project" value="UniProtKB"/>
</dbReference>
<dbReference type="GO" id="GO:0008270">
    <property type="term" value="F:zinc ion binding"/>
    <property type="evidence" value="ECO:0007669"/>
    <property type="project" value="UniProtKB-KW"/>
</dbReference>
<dbReference type="GO" id="GO:0007411">
    <property type="term" value="P:axon guidance"/>
    <property type="evidence" value="ECO:0000315"/>
    <property type="project" value="MGI"/>
</dbReference>
<dbReference type="GO" id="GO:0043697">
    <property type="term" value="P:cell dedifferentiation"/>
    <property type="evidence" value="ECO:0000316"/>
    <property type="project" value="UniProtKB"/>
</dbReference>
<dbReference type="GO" id="GO:0021953">
    <property type="term" value="P:central nervous system neuron differentiation"/>
    <property type="evidence" value="ECO:0000316"/>
    <property type="project" value="MGI"/>
</dbReference>
<dbReference type="GO" id="GO:0021797">
    <property type="term" value="P:forebrain anterior/posterior pattern specification"/>
    <property type="evidence" value="ECO:0000316"/>
    <property type="project" value="MGI"/>
</dbReference>
<dbReference type="GO" id="GO:0030900">
    <property type="term" value="P:forebrain development"/>
    <property type="evidence" value="ECO:0000315"/>
    <property type="project" value="MGI"/>
</dbReference>
<dbReference type="GO" id="GO:1904936">
    <property type="term" value="P:interneuron migration"/>
    <property type="evidence" value="ECO:0000315"/>
    <property type="project" value="MGI"/>
</dbReference>
<dbReference type="GO" id="GO:0008285">
    <property type="term" value="P:negative regulation of cell population proliferation"/>
    <property type="evidence" value="ECO:0000315"/>
    <property type="project" value="UniProtKB"/>
</dbReference>
<dbReference type="GO" id="GO:0000122">
    <property type="term" value="P:negative regulation of transcription by RNA polymerase II"/>
    <property type="evidence" value="ECO:0000315"/>
    <property type="project" value="UniProtKB"/>
</dbReference>
<dbReference type="GO" id="GO:0030182">
    <property type="term" value="P:neuron differentiation"/>
    <property type="evidence" value="ECO:0000316"/>
    <property type="project" value="MGI"/>
</dbReference>
<dbReference type="GO" id="GO:0021772">
    <property type="term" value="P:olfactory bulb development"/>
    <property type="evidence" value="ECO:0000315"/>
    <property type="project" value="MGI"/>
</dbReference>
<dbReference type="GO" id="GO:0045893">
    <property type="term" value="P:positive regulation of DNA-templated transcription"/>
    <property type="evidence" value="ECO:0000315"/>
    <property type="project" value="UniProtKB"/>
</dbReference>
<dbReference type="GO" id="GO:0045666">
    <property type="term" value="P:positive regulation of neuron differentiation"/>
    <property type="evidence" value="ECO:0000316"/>
    <property type="project" value="MGI"/>
</dbReference>
<dbReference type="GO" id="GO:0050767">
    <property type="term" value="P:regulation of neurogenesis"/>
    <property type="evidence" value="ECO:0000316"/>
    <property type="project" value="UniProtKB"/>
</dbReference>
<dbReference type="GO" id="GO:0021537">
    <property type="term" value="P:telencephalon development"/>
    <property type="evidence" value="ECO:0000315"/>
    <property type="project" value="UniProtKB"/>
</dbReference>
<dbReference type="FunFam" id="3.30.160.60:FF:000103">
    <property type="entry name" value="FEZ family zinc finger 1"/>
    <property type="match status" value="1"/>
</dbReference>
<dbReference type="FunFam" id="3.30.160.60:FF:000251">
    <property type="entry name" value="FEZ family zinc finger 2"/>
    <property type="match status" value="1"/>
</dbReference>
<dbReference type="FunFam" id="3.30.160.60:FF:000227">
    <property type="entry name" value="fez family zinc finger protein 1"/>
    <property type="match status" value="1"/>
</dbReference>
<dbReference type="FunFam" id="3.30.160.60:FF:000164">
    <property type="entry name" value="Fez family zinc finger protein 2"/>
    <property type="match status" value="1"/>
</dbReference>
<dbReference type="FunFam" id="3.30.160.60:FF:000194">
    <property type="entry name" value="Fez family zinc finger protein 2"/>
    <property type="match status" value="1"/>
</dbReference>
<dbReference type="FunFam" id="3.30.160.60:FF:000863">
    <property type="entry name" value="fez family zinc finger protein 2"/>
    <property type="match status" value="1"/>
</dbReference>
<dbReference type="Gene3D" id="3.30.160.60">
    <property type="entry name" value="Classic Zinc Finger"/>
    <property type="match status" value="6"/>
</dbReference>
<dbReference type="InterPro" id="IPR036236">
    <property type="entry name" value="Znf_C2H2_sf"/>
</dbReference>
<dbReference type="InterPro" id="IPR013087">
    <property type="entry name" value="Znf_C2H2_type"/>
</dbReference>
<dbReference type="PANTHER" id="PTHR24394">
    <property type="entry name" value="ZINC FINGER PROTEIN"/>
    <property type="match status" value="1"/>
</dbReference>
<dbReference type="PANTHER" id="PTHR24394:SF48">
    <property type="entry name" value="ZINC FINGER PROTEIN 771"/>
    <property type="match status" value="1"/>
</dbReference>
<dbReference type="Pfam" id="PF00096">
    <property type="entry name" value="zf-C2H2"/>
    <property type="match status" value="5"/>
</dbReference>
<dbReference type="Pfam" id="PF13912">
    <property type="entry name" value="zf-C2H2_6"/>
    <property type="match status" value="1"/>
</dbReference>
<dbReference type="SMART" id="SM00355">
    <property type="entry name" value="ZnF_C2H2"/>
    <property type="match status" value="6"/>
</dbReference>
<dbReference type="SUPFAM" id="SSF57667">
    <property type="entry name" value="beta-beta-alpha zinc fingers"/>
    <property type="match status" value="3"/>
</dbReference>
<dbReference type="PROSITE" id="PS00028">
    <property type="entry name" value="ZINC_FINGER_C2H2_1"/>
    <property type="match status" value="6"/>
</dbReference>
<dbReference type="PROSITE" id="PS50157">
    <property type="entry name" value="ZINC_FINGER_C2H2_2"/>
    <property type="match status" value="6"/>
</dbReference>